<organism>
    <name type="scientific">Schizosaccharomyces pombe (strain 972 / ATCC 24843)</name>
    <name type="common">Fission yeast</name>
    <dbReference type="NCBI Taxonomy" id="284812"/>
    <lineage>
        <taxon>Eukaryota</taxon>
        <taxon>Fungi</taxon>
        <taxon>Dikarya</taxon>
        <taxon>Ascomycota</taxon>
        <taxon>Taphrinomycotina</taxon>
        <taxon>Schizosaccharomycetes</taxon>
        <taxon>Schizosaccharomycetales</taxon>
        <taxon>Schizosaccharomycetaceae</taxon>
        <taxon>Schizosaccharomyces</taxon>
    </lineage>
</organism>
<gene>
    <name type="primary">rec24</name>
    <name type="synonym">mug6</name>
    <name evidence="6" type="ORF">SPAC1952.15c</name>
</gene>
<comment type="function">
    <text evidence="1 4">Required for correct meiotic chromosome segregation and recombination (PubMed:16303567). Accessory protein required for Rec12 activity, which is involved in formation of the double-strand breaks (DSBs) that initiate meiotic recombination (PubMed:21429938).</text>
</comment>
<comment type="subunit">
    <text evidence="3">Interacts with Rec7, as part of the meiotic recombination initiation complex.</text>
</comment>
<comment type="subcellular location">
    <subcellularLocation>
        <location evidence="2">Cytoplasm</location>
    </subcellularLocation>
    <subcellularLocation>
        <location evidence="2">Nucleus</location>
    </subcellularLocation>
</comment>
<comment type="similarity">
    <text evidence="5">Belongs to the MEI4L family.</text>
</comment>
<keyword id="KW-0159">Chromosome partition</keyword>
<keyword id="KW-0963">Cytoplasm</keyword>
<keyword id="KW-0469">Meiosis</keyword>
<keyword id="KW-0539">Nucleus</keyword>
<keyword id="KW-1185">Reference proteome</keyword>
<dbReference type="EMBL" id="CU329670">
    <property type="protein sequence ID" value="CAK9839087.1"/>
    <property type="molecule type" value="Genomic_DNA"/>
</dbReference>
<dbReference type="PIR" id="T37943">
    <property type="entry name" value="T37943"/>
</dbReference>
<dbReference type="RefSeq" id="NP_594817.1">
    <property type="nucleotide sequence ID" value="NM_001020246.2"/>
</dbReference>
<dbReference type="BioGRID" id="279072">
    <property type="interactions" value="12"/>
</dbReference>
<dbReference type="STRING" id="284812.Q9UUJ4"/>
<dbReference type="PaxDb" id="4896-SPAC1952.15c.1"/>
<dbReference type="EnsemblFungi" id="SPAC1952.15c.1">
    <property type="protein sequence ID" value="SPAC1952.15c.1:pep"/>
    <property type="gene ID" value="SPAC1952.15c"/>
</dbReference>
<dbReference type="GeneID" id="2542618"/>
<dbReference type="KEGG" id="spo:2542618"/>
<dbReference type="PomBase" id="SPAC1952.15c">
    <property type="gene designation" value="rec24"/>
</dbReference>
<dbReference type="VEuPathDB" id="FungiDB:SPAC1952.15c"/>
<dbReference type="HOGENOM" id="CLU_826819_0_0_1"/>
<dbReference type="InParanoid" id="Q9UUJ4"/>
<dbReference type="OMA" id="DTHRIMQ"/>
<dbReference type="PRO" id="PR:Q9UUJ4"/>
<dbReference type="Proteomes" id="UP000002485">
    <property type="component" value="Chromosome I"/>
</dbReference>
<dbReference type="GO" id="GO:0005829">
    <property type="term" value="C:cytosol"/>
    <property type="evidence" value="ECO:0007005"/>
    <property type="project" value="PomBase"/>
</dbReference>
<dbReference type="GO" id="GO:0030998">
    <property type="term" value="C:linear element"/>
    <property type="evidence" value="ECO:0000314"/>
    <property type="project" value="PomBase"/>
</dbReference>
<dbReference type="GO" id="GO:0005634">
    <property type="term" value="C:nucleus"/>
    <property type="evidence" value="ECO:0007005"/>
    <property type="project" value="PomBase"/>
</dbReference>
<dbReference type="GO" id="GO:0007059">
    <property type="term" value="P:chromosome segregation"/>
    <property type="evidence" value="ECO:0007669"/>
    <property type="project" value="UniProtKB-KW"/>
</dbReference>
<dbReference type="GO" id="GO:0042138">
    <property type="term" value="P:meiotic DNA double-strand break formation"/>
    <property type="evidence" value="ECO:0007669"/>
    <property type="project" value="InterPro"/>
</dbReference>
<dbReference type="GO" id="GO:0007131">
    <property type="term" value="P:reciprocal meiotic recombination"/>
    <property type="evidence" value="ECO:0000315"/>
    <property type="project" value="PomBase"/>
</dbReference>
<dbReference type="InterPro" id="IPR025888">
    <property type="entry name" value="MEI4"/>
</dbReference>
<dbReference type="Pfam" id="PF13971">
    <property type="entry name" value="Mei4"/>
    <property type="match status" value="2"/>
</dbReference>
<accession>Q9UUJ4</accession>
<accession>A0AAN2H7V9</accession>
<sequence length="333" mass="38370">MYTYDSSGETLKIAIAWKIILKKPKGKNIKDYIEALRKGIEDQEHCEKYASTLLEPRPKTKKDVVLKNSNVTECVALKAKPFSKKIEDMDIFLLTNVHENLQEKRQTSGSLAHLDIEYTFNGLFRFLKCTADIKLKQTKVYEGADFLRIKTLFEEIFMFLKRDCKSPLVLTRLVELGDYVLDLIIITQSIMQNNANNGTGVISRAKFLEFYVFLEQLIFNKLSFASVEQLEKLLDQIVKRMKICFTYCKNDNPSIRLLYSECFFSYAEIYFPCLHSFDAQLSSAASKCVQILRDIITNEELQTDKQELSKSAYSAPSILLIGLKDMLFPEDIS</sequence>
<proteinExistence type="evidence at protein level"/>
<protein>
    <recommendedName>
        <fullName>Meiotic recombination protein rec24</fullName>
    </recommendedName>
    <alternativeName>
        <fullName>Meiotically up-regulated gene 6 protein</fullName>
    </alternativeName>
</protein>
<name>REC24_SCHPO</name>
<feature type="chain" id="PRO_0000300499" description="Meiotic recombination protein rec24">
    <location>
        <begin position="1"/>
        <end position="333"/>
    </location>
</feature>
<reference key="1">
    <citation type="journal article" date="2002" name="Nature">
        <title>The genome sequence of Schizosaccharomyces pombe.</title>
        <authorList>
            <person name="Wood V."/>
            <person name="Gwilliam R."/>
            <person name="Rajandream M.A."/>
            <person name="Lyne M.H."/>
            <person name="Lyne R."/>
            <person name="Stewart A."/>
            <person name="Sgouros J.G."/>
            <person name="Peat N."/>
            <person name="Hayles J."/>
            <person name="Baker S.G."/>
            <person name="Basham D."/>
            <person name="Bowman S."/>
            <person name="Brooks K."/>
            <person name="Brown D."/>
            <person name="Brown S."/>
            <person name="Chillingworth T."/>
            <person name="Churcher C.M."/>
            <person name="Collins M."/>
            <person name="Connor R."/>
            <person name="Cronin A."/>
            <person name="Davis P."/>
            <person name="Feltwell T."/>
            <person name="Fraser A."/>
            <person name="Gentles S."/>
            <person name="Goble A."/>
            <person name="Hamlin N."/>
            <person name="Harris D.E."/>
            <person name="Hidalgo J."/>
            <person name="Hodgson G."/>
            <person name="Holroyd S."/>
            <person name="Hornsby T."/>
            <person name="Howarth S."/>
            <person name="Huckle E.J."/>
            <person name="Hunt S."/>
            <person name="Jagels K."/>
            <person name="James K.D."/>
            <person name="Jones L."/>
            <person name="Jones M."/>
            <person name="Leather S."/>
            <person name="McDonald S."/>
            <person name="McLean J."/>
            <person name="Mooney P."/>
            <person name="Moule S."/>
            <person name="Mungall K.L."/>
            <person name="Murphy L.D."/>
            <person name="Niblett D."/>
            <person name="Odell C."/>
            <person name="Oliver K."/>
            <person name="O'Neil S."/>
            <person name="Pearson D."/>
            <person name="Quail M.A."/>
            <person name="Rabbinowitsch E."/>
            <person name="Rutherford K.M."/>
            <person name="Rutter S."/>
            <person name="Saunders D."/>
            <person name="Seeger K."/>
            <person name="Sharp S."/>
            <person name="Skelton J."/>
            <person name="Simmonds M.N."/>
            <person name="Squares R."/>
            <person name="Squares S."/>
            <person name="Stevens K."/>
            <person name="Taylor K."/>
            <person name="Taylor R.G."/>
            <person name="Tivey A."/>
            <person name="Walsh S.V."/>
            <person name="Warren T."/>
            <person name="Whitehead S."/>
            <person name="Woodward J.R."/>
            <person name="Volckaert G."/>
            <person name="Aert R."/>
            <person name="Robben J."/>
            <person name="Grymonprez B."/>
            <person name="Weltjens I."/>
            <person name="Vanstreels E."/>
            <person name="Rieger M."/>
            <person name="Schaefer M."/>
            <person name="Mueller-Auer S."/>
            <person name="Gabel C."/>
            <person name="Fuchs M."/>
            <person name="Duesterhoeft A."/>
            <person name="Fritzc C."/>
            <person name="Holzer E."/>
            <person name="Moestl D."/>
            <person name="Hilbert H."/>
            <person name="Borzym K."/>
            <person name="Langer I."/>
            <person name="Beck A."/>
            <person name="Lehrach H."/>
            <person name="Reinhardt R."/>
            <person name="Pohl T.M."/>
            <person name="Eger P."/>
            <person name="Zimmermann W."/>
            <person name="Wedler H."/>
            <person name="Wambutt R."/>
            <person name="Purnelle B."/>
            <person name="Goffeau A."/>
            <person name="Cadieu E."/>
            <person name="Dreano S."/>
            <person name="Gloux S."/>
            <person name="Lelaure V."/>
            <person name="Mottier S."/>
            <person name="Galibert F."/>
            <person name="Aves S.J."/>
            <person name="Xiang Z."/>
            <person name="Hunt C."/>
            <person name="Moore K."/>
            <person name="Hurst S.M."/>
            <person name="Lucas M."/>
            <person name="Rochet M."/>
            <person name="Gaillardin C."/>
            <person name="Tallada V.A."/>
            <person name="Garzon A."/>
            <person name="Thode G."/>
            <person name="Daga R.R."/>
            <person name="Cruzado L."/>
            <person name="Jimenez J."/>
            <person name="Sanchez M."/>
            <person name="del Rey F."/>
            <person name="Benito J."/>
            <person name="Dominguez A."/>
            <person name="Revuelta J.L."/>
            <person name="Moreno S."/>
            <person name="Armstrong J."/>
            <person name="Forsburg S.L."/>
            <person name="Cerutti L."/>
            <person name="Lowe T."/>
            <person name="McCombie W.R."/>
            <person name="Paulsen I."/>
            <person name="Potashkin J."/>
            <person name="Shpakovski G.V."/>
            <person name="Ussery D."/>
            <person name="Barrell B.G."/>
            <person name="Nurse P."/>
        </authorList>
    </citation>
    <scope>NUCLEOTIDE SEQUENCE [LARGE SCALE GENOMIC DNA]</scope>
    <source>
        <strain>972 / ATCC 24843</strain>
    </source>
</reference>
<reference key="2">
    <citation type="journal article" date="2005" name="Curr. Biol.">
        <title>A large-scale screen in S. pombe identifies seven novel genes required for critical meiotic events.</title>
        <authorList>
            <person name="Martin-Castellanos C."/>
            <person name="Blanco M."/>
            <person name="Rozalen A.E."/>
            <person name="Perez-Hidalgo L."/>
            <person name="Garcia A.I."/>
            <person name="Conde F."/>
            <person name="Mata J."/>
            <person name="Ellermeier C."/>
            <person name="Davis L."/>
            <person name="San-Segundo P."/>
            <person name="Smith G.R."/>
            <person name="Moreno S."/>
        </authorList>
    </citation>
    <scope>FUNCTION IN MEIOSIS</scope>
</reference>
<reference key="3">
    <citation type="journal article" date="2006" name="Nat. Biotechnol.">
        <title>ORFeome cloning and global analysis of protein localization in the fission yeast Schizosaccharomyces pombe.</title>
        <authorList>
            <person name="Matsuyama A."/>
            <person name="Arai R."/>
            <person name="Yashiroda Y."/>
            <person name="Shirai A."/>
            <person name="Kamata A."/>
            <person name="Sekido S."/>
            <person name="Kobayashi Y."/>
            <person name="Hashimoto A."/>
            <person name="Hamamoto M."/>
            <person name="Hiraoka Y."/>
            <person name="Horinouchi S."/>
            <person name="Yoshida M."/>
        </authorList>
    </citation>
    <scope>SUBCELLULAR LOCATION [LARGE SCALE ANALYSIS]</scope>
</reference>
<reference key="4">
    <citation type="journal article" date="2010" name="Genes Dev.">
        <title>Functional conservation of Mei4 for meiotic DNA double-strand break formation from yeasts to mice.</title>
        <authorList>
            <person name="Kumar R."/>
            <person name="Bourbon H.M."/>
            <person name="de Massy B."/>
        </authorList>
    </citation>
    <scope>INTERACTION WITH REC7</scope>
</reference>
<reference key="5">
    <citation type="journal article" date="2011" name="J. Cell Sci.">
        <title>Functional interactions of Rec24, the fission yeast ortholog of mouse Mei4, with the meiotic recombination-initiation complex.</title>
        <authorList>
            <person name="Bonfils S."/>
            <person name="Rozalen A.E."/>
            <person name="Smith G.R."/>
            <person name="Moreno S."/>
            <person name="Martin-Castellanos C."/>
        </authorList>
    </citation>
    <scope>FUNCTION</scope>
</reference>
<evidence type="ECO:0000269" key="1">
    <source>
    </source>
</evidence>
<evidence type="ECO:0000269" key="2">
    <source>
    </source>
</evidence>
<evidence type="ECO:0000269" key="3">
    <source>
    </source>
</evidence>
<evidence type="ECO:0000269" key="4">
    <source>
    </source>
</evidence>
<evidence type="ECO:0000305" key="5"/>
<evidence type="ECO:0000312" key="6">
    <source>
        <dbReference type="PomBase" id="SPAC1952.15c"/>
    </source>
</evidence>